<dbReference type="EC" id="2.7.4.3" evidence="1"/>
<dbReference type="EMBL" id="CP000941">
    <property type="protein sequence ID" value="ACA11267.1"/>
    <property type="molecule type" value="Genomic_DNA"/>
</dbReference>
<dbReference type="RefSeq" id="WP_004085328.1">
    <property type="nucleotide sequence ID" value="NC_010513.1"/>
</dbReference>
<dbReference type="SMR" id="B0U1U0"/>
<dbReference type="KEGG" id="xfm:Xfasm12_0240"/>
<dbReference type="HOGENOM" id="CLU_032354_1_2_6"/>
<dbReference type="UniPathway" id="UPA00588">
    <property type="reaction ID" value="UER00649"/>
</dbReference>
<dbReference type="GO" id="GO:0005737">
    <property type="term" value="C:cytoplasm"/>
    <property type="evidence" value="ECO:0007669"/>
    <property type="project" value="UniProtKB-SubCell"/>
</dbReference>
<dbReference type="GO" id="GO:0004017">
    <property type="term" value="F:adenylate kinase activity"/>
    <property type="evidence" value="ECO:0007669"/>
    <property type="project" value="UniProtKB-UniRule"/>
</dbReference>
<dbReference type="GO" id="GO:0005524">
    <property type="term" value="F:ATP binding"/>
    <property type="evidence" value="ECO:0007669"/>
    <property type="project" value="UniProtKB-UniRule"/>
</dbReference>
<dbReference type="GO" id="GO:0044209">
    <property type="term" value="P:AMP salvage"/>
    <property type="evidence" value="ECO:0007669"/>
    <property type="project" value="UniProtKB-UniRule"/>
</dbReference>
<dbReference type="CDD" id="cd01428">
    <property type="entry name" value="ADK"/>
    <property type="match status" value="1"/>
</dbReference>
<dbReference type="Gene3D" id="3.40.50.300">
    <property type="entry name" value="P-loop containing nucleotide triphosphate hydrolases"/>
    <property type="match status" value="1"/>
</dbReference>
<dbReference type="HAMAP" id="MF_00235">
    <property type="entry name" value="Adenylate_kinase_Adk"/>
    <property type="match status" value="1"/>
</dbReference>
<dbReference type="InterPro" id="IPR006259">
    <property type="entry name" value="Adenyl_kin_sub"/>
</dbReference>
<dbReference type="InterPro" id="IPR000850">
    <property type="entry name" value="Adenylat/UMP-CMP_kin"/>
</dbReference>
<dbReference type="InterPro" id="IPR033690">
    <property type="entry name" value="Adenylat_kinase_CS"/>
</dbReference>
<dbReference type="InterPro" id="IPR027417">
    <property type="entry name" value="P-loop_NTPase"/>
</dbReference>
<dbReference type="NCBIfam" id="TIGR01351">
    <property type="entry name" value="adk"/>
    <property type="match status" value="1"/>
</dbReference>
<dbReference type="NCBIfam" id="NF001381">
    <property type="entry name" value="PRK00279.1-3"/>
    <property type="match status" value="1"/>
</dbReference>
<dbReference type="NCBIfam" id="NF011100">
    <property type="entry name" value="PRK14527.1"/>
    <property type="match status" value="1"/>
</dbReference>
<dbReference type="NCBIfam" id="NF011101">
    <property type="entry name" value="PRK14528.1"/>
    <property type="match status" value="1"/>
</dbReference>
<dbReference type="NCBIfam" id="NF011104">
    <property type="entry name" value="PRK14531.1"/>
    <property type="match status" value="1"/>
</dbReference>
<dbReference type="NCBIfam" id="NF011105">
    <property type="entry name" value="PRK14532.1"/>
    <property type="match status" value="1"/>
</dbReference>
<dbReference type="PANTHER" id="PTHR23359">
    <property type="entry name" value="NUCLEOTIDE KINASE"/>
    <property type="match status" value="1"/>
</dbReference>
<dbReference type="Pfam" id="PF00406">
    <property type="entry name" value="ADK"/>
    <property type="match status" value="1"/>
</dbReference>
<dbReference type="PRINTS" id="PR00094">
    <property type="entry name" value="ADENYLTKNASE"/>
</dbReference>
<dbReference type="SUPFAM" id="SSF52540">
    <property type="entry name" value="P-loop containing nucleoside triphosphate hydrolases"/>
    <property type="match status" value="1"/>
</dbReference>
<dbReference type="PROSITE" id="PS00113">
    <property type="entry name" value="ADENYLATE_KINASE"/>
    <property type="match status" value="1"/>
</dbReference>
<proteinExistence type="inferred from homology"/>
<gene>
    <name evidence="1" type="primary">adk</name>
    <name type="ordered locus">Xfasm12_0240</name>
</gene>
<comment type="function">
    <text evidence="1">Catalyzes the reversible transfer of the terminal phosphate group between ATP and AMP. Plays an important role in cellular energy homeostasis and in adenine nucleotide metabolism.</text>
</comment>
<comment type="catalytic activity">
    <reaction evidence="1">
        <text>AMP + ATP = 2 ADP</text>
        <dbReference type="Rhea" id="RHEA:12973"/>
        <dbReference type="ChEBI" id="CHEBI:30616"/>
        <dbReference type="ChEBI" id="CHEBI:456215"/>
        <dbReference type="ChEBI" id="CHEBI:456216"/>
        <dbReference type="EC" id="2.7.4.3"/>
    </reaction>
</comment>
<comment type="pathway">
    <text evidence="1">Purine metabolism; AMP biosynthesis via salvage pathway; AMP from ADP: step 1/1.</text>
</comment>
<comment type="subunit">
    <text evidence="1">Monomer.</text>
</comment>
<comment type="subcellular location">
    <subcellularLocation>
        <location evidence="1">Cytoplasm</location>
    </subcellularLocation>
</comment>
<comment type="domain">
    <text evidence="1">Consists of three domains, a large central CORE domain and two small peripheral domains, NMPbind and LID, which undergo movements during catalysis. The LID domain closes over the site of phosphoryl transfer upon ATP binding. Assembling and dissambling the active center during each catalytic cycle provides an effective means to prevent ATP hydrolysis.</text>
</comment>
<comment type="similarity">
    <text evidence="1">Belongs to the adenylate kinase family.</text>
</comment>
<reference key="1">
    <citation type="journal article" date="2010" name="J. Bacteriol.">
        <title>Whole genome sequences of two Xylella fastidiosa strains (M12 and M23) causing almond leaf scorch disease in California.</title>
        <authorList>
            <person name="Chen J."/>
            <person name="Xie G."/>
            <person name="Han S."/>
            <person name="Chertkov O."/>
            <person name="Sims D."/>
            <person name="Civerolo E.L."/>
        </authorList>
    </citation>
    <scope>NUCLEOTIDE SEQUENCE [LARGE SCALE GENOMIC DNA]</scope>
    <source>
        <strain>M12</strain>
    </source>
</reference>
<feature type="chain" id="PRO_1000100630" description="Adenylate kinase">
    <location>
        <begin position="1"/>
        <end position="187"/>
    </location>
</feature>
<feature type="region of interest" description="NMP" evidence="1">
    <location>
        <begin position="30"/>
        <end position="59"/>
    </location>
</feature>
<feature type="region of interest" description="LID" evidence="1">
    <location>
        <begin position="126"/>
        <end position="136"/>
    </location>
</feature>
<feature type="binding site" evidence="1">
    <location>
        <begin position="10"/>
        <end position="15"/>
    </location>
    <ligand>
        <name>ATP</name>
        <dbReference type="ChEBI" id="CHEBI:30616"/>
    </ligand>
</feature>
<feature type="binding site" evidence="1">
    <location>
        <position position="31"/>
    </location>
    <ligand>
        <name>AMP</name>
        <dbReference type="ChEBI" id="CHEBI:456215"/>
    </ligand>
</feature>
<feature type="binding site" evidence="1">
    <location>
        <position position="36"/>
    </location>
    <ligand>
        <name>AMP</name>
        <dbReference type="ChEBI" id="CHEBI:456215"/>
    </ligand>
</feature>
<feature type="binding site" evidence="1">
    <location>
        <begin position="57"/>
        <end position="59"/>
    </location>
    <ligand>
        <name>AMP</name>
        <dbReference type="ChEBI" id="CHEBI:456215"/>
    </ligand>
</feature>
<feature type="binding site" evidence="1">
    <location>
        <begin position="85"/>
        <end position="88"/>
    </location>
    <ligand>
        <name>AMP</name>
        <dbReference type="ChEBI" id="CHEBI:456215"/>
    </ligand>
</feature>
<feature type="binding site" evidence="1">
    <location>
        <position position="92"/>
    </location>
    <ligand>
        <name>AMP</name>
        <dbReference type="ChEBI" id="CHEBI:456215"/>
    </ligand>
</feature>
<feature type="binding site" evidence="1">
    <location>
        <position position="127"/>
    </location>
    <ligand>
        <name>ATP</name>
        <dbReference type="ChEBI" id="CHEBI:30616"/>
    </ligand>
</feature>
<feature type="binding site" evidence="1">
    <location>
        <position position="133"/>
    </location>
    <ligand>
        <name>AMP</name>
        <dbReference type="ChEBI" id="CHEBI:456215"/>
    </ligand>
</feature>
<feature type="binding site" evidence="1">
    <location>
        <position position="144"/>
    </location>
    <ligand>
        <name>AMP</name>
        <dbReference type="ChEBI" id="CHEBI:456215"/>
    </ligand>
</feature>
<feature type="binding site" evidence="1">
    <location>
        <position position="172"/>
    </location>
    <ligand>
        <name>ATP</name>
        <dbReference type="ChEBI" id="CHEBI:30616"/>
    </ligand>
</feature>
<accession>B0U1U0</accession>
<protein>
    <recommendedName>
        <fullName evidence="1">Adenylate kinase</fullName>
        <shortName evidence="1">AK</shortName>
        <ecNumber evidence="1">2.7.4.3</ecNumber>
    </recommendedName>
    <alternativeName>
        <fullName evidence="1">ATP-AMP transphosphorylase</fullName>
    </alternativeName>
    <alternativeName>
        <fullName evidence="1">ATP:AMP phosphotransferase</fullName>
    </alternativeName>
    <alternativeName>
        <fullName evidence="1">Adenylate monophosphate kinase</fullName>
    </alternativeName>
</protein>
<keyword id="KW-0067">ATP-binding</keyword>
<keyword id="KW-0963">Cytoplasm</keyword>
<keyword id="KW-0418">Kinase</keyword>
<keyword id="KW-0545">Nucleotide biosynthesis</keyword>
<keyword id="KW-0547">Nucleotide-binding</keyword>
<keyword id="KW-0808">Transferase</keyword>
<evidence type="ECO:0000255" key="1">
    <source>
        <dbReference type="HAMAP-Rule" id="MF_00235"/>
    </source>
</evidence>
<organism>
    <name type="scientific">Xylella fastidiosa (strain M12)</name>
    <dbReference type="NCBI Taxonomy" id="405440"/>
    <lineage>
        <taxon>Bacteria</taxon>
        <taxon>Pseudomonadati</taxon>
        <taxon>Pseudomonadota</taxon>
        <taxon>Gammaproteobacteria</taxon>
        <taxon>Lysobacterales</taxon>
        <taxon>Lysobacteraceae</taxon>
        <taxon>Xylella</taxon>
    </lineage>
</organism>
<sequence>MRLVLLGPPGSGKGTQAAQMKETLQIPHISTGDLLRSEVVAGTPLGLQAKQVMAQGDLVSDAILIGMLESRLSHTDVVKGFILDGYPRNLSQAAALDGLLAKFGHPLNAVVQLEVPTDVLVERIAGRAQAEGREDDTPDAVRKRLQVYNDSTAPVIGFYQQRGILLRVDGVGRLDEVSQRIAVALGC</sequence>
<name>KAD_XYLFM</name>